<proteinExistence type="predicted"/>
<feature type="chain" id="PRO_0000388244" description="Bromodomain-containing protein DDB_G0271118">
    <location>
        <begin position="1"/>
        <end position="234"/>
    </location>
</feature>
<feature type="domain" description="Bromo" evidence="1">
    <location>
        <begin position="1"/>
        <end position="60"/>
    </location>
</feature>
<feature type="region of interest" description="Disordered" evidence="2">
    <location>
        <begin position="134"/>
        <end position="209"/>
    </location>
</feature>
<feature type="compositionally biased region" description="Low complexity" evidence="2">
    <location>
        <begin position="134"/>
        <end position="194"/>
    </location>
</feature>
<keyword id="KW-0103">Bromodomain</keyword>
<keyword id="KW-1185">Reference proteome</keyword>
<name>Y1118_DICDI</name>
<gene>
    <name type="ORF">DDB_G0271118</name>
</gene>
<dbReference type="EMBL" id="AAFI02000006">
    <property type="protein sequence ID" value="EAL71891.1"/>
    <property type="molecule type" value="Genomic_DNA"/>
</dbReference>
<dbReference type="RefSeq" id="XP_645811.1">
    <property type="nucleotide sequence ID" value="XM_640719.1"/>
</dbReference>
<dbReference type="SMR" id="Q55BK3"/>
<dbReference type="STRING" id="44689.Q55BK3"/>
<dbReference type="PaxDb" id="44689-DDB0220696"/>
<dbReference type="EnsemblProtists" id="EAL71891">
    <property type="protein sequence ID" value="EAL71891"/>
    <property type="gene ID" value="DDB_G0271118"/>
</dbReference>
<dbReference type="GeneID" id="8617802"/>
<dbReference type="KEGG" id="ddi:DDB_G0271118"/>
<dbReference type="VEuPathDB" id="AmoebaDB:DDB_G0271118"/>
<dbReference type="HOGENOM" id="CLU_1186857_0_0_1"/>
<dbReference type="InParanoid" id="Q55BK3"/>
<dbReference type="PRO" id="PR:Q55BK3"/>
<dbReference type="Proteomes" id="UP000002195">
    <property type="component" value="Chromosome 2"/>
</dbReference>
<dbReference type="Gene3D" id="1.20.920.10">
    <property type="entry name" value="Bromodomain-like"/>
    <property type="match status" value="1"/>
</dbReference>
<dbReference type="InterPro" id="IPR001487">
    <property type="entry name" value="Bromodomain"/>
</dbReference>
<dbReference type="InterPro" id="IPR036427">
    <property type="entry name" value="Bromodomain-like_sf"/>
</dbReference>
<dbReference type="InterPro" id="IPR052442">
    <property type="entry name" value="Env_Response_Regulator"/>
</dbReference>
<dbReference type="InterPro" id="IPR027353">
    <property type="entry name" value="NET_dom"/>
</dbReference>
<dbReference type="PANTHER" id="PTHR46136:SF1">
    <property type="entry name" value="TRANSCRIPTION FACTOR GTE11-RELATED"/>
    <property type="match status" value="1"/>
</dbReference>
<dbReference type="PANTHER" id="PTHR46136">
    <property type="entry name" value="TRANSCRIPTION FACTOR GTE8"/>
    <property type="match status" value="1"/>
</dbReference>
<dbReference type="Pfam" id="PF17035">
    <property type="entry name" value="BET"/>
    <property type="match status" value="1"/>
</dbReference>
<dbReference type="Pfam" id="PF00439">
    <property type="entry name" value="Bromodomain"/>
    <property type="match status" value="1"/>
</dbReference>
<dbReference type="PRINTS" id="PR00503">
    <property type="entry name" value="BROMODOMAIN"/>
</dbReference>
<dbReference type="SUPFAM" id="SSF47370">
    <property type="entry name" value="Bromodomain"/>
    <property type="match status" value="1"/>
</dbReference>
<dbReference type="PROSITE" id="PS50014">
    <property type="entry name" value="BROMODOMAIN_2"/>
    <property type="match status" value="1"/>
</dbReference>
<protein>
    <recommendedName>
        <fullName>Bromodomain-containing protein DDB_G0271118</fullName>
    </recommendedName>
</protein>
<reference key="1">
    <citation type="journal article" date="2002" name="Nature">
        <title>Sequence and analysis of chromosome 2 of Dictyostelium discoideum.</title>
        <authorList>
            <person name="Gloeckner G."/>
            <person name="Eichinger L."/>
            <person name="Szafranski K."/>
            <person name="Pachebat J.A."/>
            <person name="Bankier A.T."/>
            <person name="Dear P.H."/>
            <person name="Lehmann R."/>
            <person name="Baumgart C."/>
            <person name="Parra G."/>
            <person name="Abril J.F."/>
            <person name="Guigo R."/>
            <person name="Kumpf K."/>
            <person name="Tunggal B."/>
            <person name="Cox E.C."/>
            <person name="Quail M.A."/>
            <person name="Platzer M."/>
            <person name="Rosenthal A."/>
            <person name="Noegel A.A."/>
        </authorList>
    </citation>
    <scope>NUCLEOTIDE SEQUENCE [LARGE SCALE GENOMIC DNA]</scope>
    <source>
        <strain>AX4</strain>
    </source>
</reference>
<reference key="2">
    <citation type="journal article" date="2005" name="Nature">
        <title>The genome of the social amoeba Dictyostelium discoideum.</title>
        <authorList>
            <person name="Eichinger L."/>
            <person name="Pachebat J.A."/>
            <person name="Gloeckner G."/>
            <person name="Rajandream M.A."/>
            <person name="Sucgang R."/>
            <person name="Berriman M."/>
            <person name="Song J."/>
            <person name="Olsen R."/>
            <person name="Szafranski K."/>
            <person name="Xu Q."/>
            <person name="Tunggal B."/>
            <person name="Kummerfeld S."/>
            <person name="Madera M."/>
            <person name="Konfortov B.A."/>
            <person name="Rivero F."/>
            <person name="Bankier A.T."/>
            <person name="Lehmann R."/>
            <person name="Hamlin N."/>
            <person name="Davies R."/>
            <person name="Gaudet P."/>
            <person name="Fey P."/>
            <person name="Pilcher K."/>
            <person name="Chen G."/>
            <person name="Saunders D."/>
            <person name="Sodergren E.J."/>
            <person name="Davis P."/>
            <person name="Kerhornou A."/>
            <person name="Nie X."/>
            <person name="Hall N."/>
            <person name="Anjard C."/>
            <person name="Hemphill L."/>
            <person name="Bason N."/>
            <person name="Farbrother P."/>
            <person name="Desany B."/>
            <person name="Just E."/>
            <person name="Morio T."/>
            <person name="Rost R."/>
            <person name="Churcher C.M."/>
            <person name="Cooper J."/>
            <person name="Haydock S."/>
            <person name="van Driessche N."/>
            <person name="Cronin A."/>
            <person name="Goodhead I."/>
            <person name="Muzny D.M."/>
            <person name="Mourier T."/>
            <person name="Pain A."/>
            <person name="Lu M."/>
            <person name="Harper D."/>
            <person name="Lindsay R."/>
            <person name="Hauser H."/>
            <person name="James K.D."/>
            <person name="Quiles M."/>
            <person name="Madan Babu M."/>
            <person name="Saito T."/>
            <person name="Buchrieser C."/>
            <person name="Wardroper A."/>
            <person name="Felder M."/>
            <person name="Thangavelu M."/>
            <person name="Johnson D."/>
            <person name="Knights A."/>
            <person name="Loulseged H."/>
            <person name="Mungall K.L."/>
            <person name="Oliver K."/>
            <person name="Price C."/>
            <person name="Quail M.A."/>
            <person name="Urushihara H."/>
            <person name="Hernandez J."/>
            <person name="Rabbinowitsch E."/>
            <person name="Steffen D."/>
            <person name="Sanders M."/>
            <person name="Ma J."/>
            <person name="Kohara Y."/>
            <person name="Sharp S."/>
            <person name="Simmonds M.N."/>
            <person name="Spiegler S."/>
            <person name="Tivey A."/>
            <person name="Sugano S."/>
            <person name="White B."/>
            <person name="Walker D."/>
            <person name="Woodward J.R."/>
            <person name="Winckler T."/>
            <person name="Tanaka Y."/>
            <person name="Shaulsky G."/>
            <person name="Schleicher M."/>
            <person name="Weinstock G.M."/>
            <person name="Rosenthal A."/>
            <person name="Cox E.C."/>
            <person name="Chisholm R.L."/>
            <person name="Gibbs R.A."/>
            <person name="Loomis W.F."/>
            <person name="Platzer M."/>
            <person name="Kay R.R."/>
            <person name="Williams J.G."/>
            <person name="Dear P.H."/>
            <person name="Noegel A.A."/>
            <person name="Barrell B.G."/>
            <person name="Kuspa A."/>
        </authorList>
    </citation>
    <scope>NUCLEOTIDE SEQUENCE [LARGE SCALE GENOMIC DNA]</scope>
    <source>
        <strain>AX4</strain>
    </source>
</reference>
<evidence type="ECO:0000255" key="1">
    <source>
        <dbReference type="PROSITE-ProRule" id="PRU00035"/>
    </source>
</evidence>
<evidence type="ECO:0000256" key="2">
    <source>
        <dbReference type="SAM" id="MobiDB-lite"/>
    </source>
</evidence>
<sequence length="234" mass="26844">MDLGTIKGELDNNGYSTIKDFTADVRLMFENALTYNADSSPIWKHAKTLLYFHRKHDEHVKVKEDTNSAQPTLLRLQIIQIVKMLHLHLHLHLHLHLHLHLHLHLHLHLHLHLHLHLHLHLHLHLHLQNNQIINNNSNNNNNNNNNNNNNNNNNNNNNNNNNNNNNNNNNSNSTTNSSSSSSSSSSSSSSSSSSTTTTQKKYSDEERRNLMERINELAPDYVQEVLNIIDPNAS</sequence>
<accession>Q55BK3</accession>
<organism>
    <name type="scientific">Dictyostelium discoideum</name>
    <name type="common">Social amoeba</name>
    <dbReference type="NCBI Taxonomy" id="44689"/>
    <lineage>
        <taxon>Eukaryota</taxon>
        <taxon>Amoebozoa</taxon>
        <taxon>Evosea</taxon>
        <taxon>Eumycetozoa</taxon>
        <taxon>Dictyostelia</taxon>
        <taxon>Dictyosteliales</taxon>
        <taxon>Dictyosteliaceae</taxon>
        <taxon>Dictyostelium</taxon>
    </lineage>
</organism>